<sequence length="132" mass="14802">MVMTDPIADFLTRIRNANQVKHEVLEVPASNIKKGIAEILKREGFVKNVEVIEDDKQGIIRVFLKYGKNGERVITNLKRISKPGLRVYAKRDDMPKVLNGLGIAIISTSEGLLTDKEARQKNVGGEVIAYVW</sequence>
<gene>
    <name evidence="1" type="primary">rpsH</name>
    <name type="ordered locus">MGAS2096_Spy0061</name>
</gene>
<keyword id="KW-0687">Ribonucleoprotein</keyword>
<keyword id="KW-0689">Ribosomal protein</keyword>
<keyword id="KW-0694">RNA-binding</keyword>
<keyword id="KW-0699">rRNA-binding</keyword>
<reference key="1">
    <citation type="journal article" date="2006" name="Proc. Natl. Acad. Sci. U.S.A.">
        <title>Molecular genetic anatomy of inter- and intraserotype variation in the human bacterial pathogen group A Streptococcus.</title>
        <authorList>
            <person name="Beres S.B."/>
            <person name="Richter E.W."/>
            <person name="Nagiec M.J."/>
            <person name="Sumby P."/>
            <person name="Porcella S.F."/>
            <person name="DeLeo F.R."/>
            <person name="Musser J.M."/>
        </authorList>
    </citation>
    <scope>NUCLEOTIDE SEQUENCE [LARGE SCALE GENOMIC DNA]</scope>
    <source>
        <strain>MGAS2096</strain>
    </source>
</reference>
<accession>Q1JE45</accession>
<dbReference type="EMBL" id="CP000261">
    <property type="protein sequence ID" value="ABF35113.1"/>
    <property type="molecule type" value="Genomic_DNA"/>
</dbReference>
<dbReference type="SMR" id="Q1JE45"/>
<dbReference type="KEGG" id="spj:MGAS2096_Spy0061"/>
<dbReference type="HOGENOM" id="CLU_098428_0_2_9"/>
<dbReference type="GO" id="GO:1990904">
    <property type="term" value="C:ribonucleoprotein complex"/>
    <property type="evidence" value="ECO:0007669"/>
    <property type="project" value="UniProtKB-KW"/>
</dbReference>
<dbReference type="GO" id="GO:0005840">
    <property type="term" value="C:ribosome"/>
    <property type="evidence" value="ECO:0007669"/>
    <property type="project" value="UniProtKB-KW"/>
</dbReference>
<dbReference type="GO" id="GO:0019843">
    <property type="term" value="F:rRNA binding"/>
    <property type="evidence" value="ECO:0007669"/>
    <property type="project" value="UniProtKB-UniRule"/>
</dbReference>
<dbReference type="GO" id="GO:0003735">
    <property type="term" value="F:structural constituent of ribosome"/>
    <property type="evidence" value="ECO:0007669"/>
    <property type="project" value="InterPro"/>
</dbReference>
<dbReference type="GO" id="GO:0006412">
    <property type="term" value="P:translation"/>
    <property type="evidence" value="ECO:0007669"/>
    <property type="project" value="UniProtKB-UniRule"/>
</dbReference>
<dbReference type="FunFam" id="3.30.1370.30:FF:000002">
    <property type="entry name" value="30S ribosomal protein S8"/>
    <property type="match status" value="1"/>
</dbReference>
<dbReference type="FunFam" id="3.30.1490.10:FF:000001">
    <property type="entry name" value="30S ribosomal protein S8"/>
    <property type="match status" value="1"/>
</dbReference>
<dbReference type="Gene3D" id="3.30.1370.30">
    <property type="match status" value="1"/>
</dbReference>
<dbReference type="Gene3D" id="3.30.1490.10">
    <property type="match status" value="1"/>
</dbReference>
<dbReference type="HAMAP" id="MF_01302_B">
    <property type="entry name" value="Ribosomal_uS8_B"/>
    <property type="match status" value="1"/>
</dbReference>
<dbReference type="InterPro" id="IPR000630">
    <property type="entry name" value="Ribosomal_uS8"/>
</dbReference>
<dbReference type="InterPro" id="IPR047863">
    <property type="entry name" value="Ribosomal_uS8_CS"/>
</dbReference>
<dbReference type="InterPro" id="IPR035987">
    <property type="entry name" value="Ribosomal_uS8_sf"/>
</dbReference>
<dbReference type="NCBIfam" id="NF001109">
    <property type="entry name" value="PRK00136.1"/>
    <property type="match status" value="1"/>
</dbReference>
<dbReference type="PANTHER" id="PTHR11758">
    <property type="entry name" value="40S RIBOSOMAL PROTEIN S15A"/>
    <property type="match status" value="1"/>
</dbReference>
<dbReference type="Pfam" id="PF00410">
    <property type="entry name" value="Ribosomal_S8"/>
    <property type="match status" value="1"/>
</dbReference>
<dbReference type="SUPFAM" id="SSF56047">
    <property type="entry name" value="Ribosomal protein S8"/>
    <property type="match status" value="1"/>
</dbReference>
<dbReference type="PROSITE" id="PS00053">
    <property type="entry name" value="RIBOSOMAL_S8"/>
    <property type="match status" value="1"/>
</dbReference>
<feature type="chain" id="PRO_0000290941" description="Small ribosomal subunit protein uS8">
    <location>
        <begin position="1"/>
        <end position="132"/>
    </location>
</feature>
<organism>
    <name type="scientific">Streptococcus pyogenes serotype M12 (strain MGAS2096)</name>
    <dbReference type="NCBI Taxonomy" id="370553"/>
    <lineage>
        <taxon>Bacteria</taxon>
        <taxon>Bacillati</taxon>
        <taxon>Bacillota</taxon>
        <taxon>Bacilli</taxon>
        <taxon>Lactobacillales</taxon>
        <taxon>Streptococcaceae</taxon>
        <taxon>Streptococcus</taxon>
    </lineage>
</organism>
<comment type="function">
    <text evidence="1">One of the primary rRNA binding proteins, it binds directly to 16S rRNA central domain where it helps coordinate assembly of the platform of the 30S subunit.</text>
</comment>
<comment type="subunit">
    <text evidence="1">Part of the 30S ribosomal subunit. Contacts proteins S5 and S12.</text>
</comment>
<comment type="similarity">
    <text evidence="1">Belongs to the universal ribosomal protein uS8 family.</text>
</comment>
<protein>
    <recommendedName>
        <fullName evidence="1">Small ribosomal subunit protein uS8</fullName>
    </recommendedName>
    <alternativeName>
        <fullName evidence="2">30S ribosomal protein S8</fullName>
    </alternativeName>
</protein>
<evidence type="ECO:0000255" key="1">
    <source>
        <dbReference type="HAMAP-Rule" id="MF_01302"/>
    </source>
</evidence>
<evidence type="ECO:0000305" key="2"/>
<proteinExistence type="inferred from homology"/>
<name>RS8_STRPB</name>